<feature type="chain" id="PRO_0000449284" description="Short chain dehydrogenase virL">
    <location>
        <begin position="1"/>
        <end position="341"/>
    </location>
</feature>
<feature type="active site" description="Proton donor" evidence="2">
    <location>
        <position position="210"/>
    </location>
</feature>
<feature type="active site" description="Lowers pKa of active site Tyr" evidence="2">
    <location>
        <position position="214"/>
    </location>
</feature>
<feature type="binding site" evidence="1">
    <location>
        <position position="49"/>
    </location>
    <ligand>
        <name>NADP(+)</name>
        <dbReference type="ChEBI" id="CHEBI:58349"/>
    </ligand>
</feature>
<feature type="binding site" evidence="1">
    <location>
        <position position="74"/>
    </location>
    <ligand>
        <name>NADP(+)</name>
        <dbReference type="ChEBI" id="CHEBI:58349"/>
    </ligand>
</feature>
<feature type="binding site" evidence="1">
    <location>
        <position position="97"/>
    </location>
    <ligand>
        <name>NADP(+)</name>
        <dbReference type="ChEBI" id="CHEBI:58349"/>
    </ligand>
</feature>
<feature type="binding site" evidence="2">
    <location>
        <position position="123"/>
    </location>
    <ligand>
        <name>NADP(+)</name>
        <dbReference type="ChEBI" id="CHEBI:58349"/>
    </ligand>
</feature>
<feature type="binding site" evidence="2">
    <location>
        <position position="210"/>
    </location>
    <ligand>
        <name>NADP(+)</name>
        <dbReference type="ChEBI" id="CHEBI:58349"/>
    </ligand>
</feature>
<feature type="binding site" evidence="2">
    <location>
        <position position="214"/>
    </location>
    <ligand>
        <name>NADP(+)</name>
        <dbReference type="ChEBI" id="CHEBI:58349"/>
    </ligand>
</feature>
<organism>
    <name type="scientific">Hypocrea virens (strain Gv29-8 / FGSC 10586)</name>
    <name type="common">Gliocladium virens</name>
    <name type="synonym">Trichoderma virens</name>
    <dbReference type="NCBI Taxonomy" id="413071"/>
    <lineage>
        <taxon>Eukaryota</taxon>
        <taxon>Fungi</taxon>
        <taxon>Dikarya</taxon>
        <taxon>Ascomycota</taxon>
        <taxon>Pezizomycotina</taxon>
        <taxon>Sordariomycetes</taxon>
        <taxon>Hypocreomycetidae</taxon>
        <taxon>Hypocreales</taxon>
        <taxon>Hypocreaceae</taxon>
        <taxon>Trichoderma</taxon>
    </lineage>
</organism>
<name>VIRL_HYPVG</name>
<evidence type="ECO:0000250" key="1">
    <source>
        <dbReference type="UniProtKB" id="L0E2Z4"/>
    </source>
</evidence>
<evidence type="ECO:0000250" key="2">
    <source>
        <dbReference type="UniProtKB" id="O93868"/>
    </source>
</evidence>
<evidence type="ECO:0000269" key="3">
    <source>
    </source>
</evidence>
<evidence type="ECO:0000303" key="4">
    <source>
    </source>
</evidence>
<evidence type="ECO:0000305" key="5"/>
<evidence type="ECO:0000305" key="6">
    <source>
    </source>
</evidence>
<keyword id="KW-0521">NADP</keyword>
<keyword id="KW-0560">Oxidoreductase</keyword>
<keyword id="KW-1185">Reference proteome</keyword>
<sequence>MSSQLENEASFEATTLGFLWRQFTRPKPLPTGITLAGQVAIVTGSNVGLGFSASRQLLQLGLSHLIMGVRSQAKGDVAAAQLRTDFPFATISVWIVDMESYDSVCAFASRCESLDRIDIVILNAGLIKTPYTVVRATGNEVTLQVNYLSTALLTILLLPILKAKKRVDCSWSPVISIVGSDLMYENEVELEGPVLPQFQQEETFSQFSWYGKSKLLQTMFISKIAEFVNPHDVLVNVSNPGMTGGTDFFRGYPALMMKLIAVGQWILARPVDMAATTYLDAVLVQGEKSHGSFTSDWTIKPYPKIWYTPEGQQLRERLWEETMEELNFVGASKIVNDLKRS</sequence>
<protein>
    <recommendedName>
        <fullName evidence="4">Short chain dehydrogenase virL</fullName>
        <ecNumber evidence="6">1.1.1.-</ecNumber>
    </recommendedName>
    <alternativeName>
        <fullName evidence="4">Trichoxide biosynthesis protein virL</fullName>
    </alternativeName>
    <alternativeName>
        <fullName evidence="4">Virensol biosynthesis cluster protein L</fullName>
    </alternativeName>
</protein>
<dbReference type="EC" id="1.1.1.-" evidence="6"/>
<dbReference type="EMBL" id="ABDF02000086">
    <property type="protein sequence ID" value="EHK18427.1"/>
    <property type="molecule type" value="Genomic_DNA"/>
</dbReference>
<dbReference type="RefSeq" id="XP_013952627.1">
    <property type="nucleotide sequence ID" value="XM_014097152.1"/>
</dbReference>
<dbReference type="SMR" id="G9N4A1"/>
<dbReference type="FunCoup" id="G9N4A1">
    <property type="interactions" value="24"/>
</dbReference>
<dbReference type="STRING" id="413071.G9N4A1"/>
<dbReference type="EnsemblFungi" id="EHK18427">
    <property type="protein sequence ID" value="EHK18427"/>
    <property type="gene ID" value="TRIVIDRAFT_47190"/>
</dbReference>
<dbReference type="GeneID" id="25794622"/>
<dbReference type="VEuPathDB" id="FungiDB:TRIVIDRAFT_47190"/>
<dbReference type="eggNOG" id="KOG1208">
    <property type="taxonomic scope" value="Eukaryota"/>
</dbReference>
<dbReference type="HOGENOM" id="CLU_010194_44_4_1"/>
<dbReference type="InParanoid" id="G9N4A1"/>
<dbReference type="OMA" id="VNFPNPG"/>
<dbReference type="OrthoDB" id="542013at2759"/>
<dbReference type="Proteomes" id="UP000007115">
    <property type="component" value="Unassembled WGS sequence"/>
</dbReference>
<dbReference type="GO" id="GO:0016491">
    <property type="term" value="F:oxidoreductase activity"/>
    <property type="evidence" value="ECO:0007669"/>
    <property type="project" value="UniProtKB-KW"/>
</dbReference>
<dbReference type="Gene3D" id="3.40.50.720">
    <property type="entry name" value="NAD(P)-binding Rossmann-like Domain"/>
    <property type="match status" value="1"/>
</dbReference>
<dbReference type="InterPro" id="IPR036291">
    <property type="entry name" value="NAD(P)-bd_dom_sf"/>
</dbReference>
<dbReference type="InterPro" id="IPR002347">
    <property type="entry name" value="SDR_fam"/>
</dbReference>
<dbReference type="PANTHER" id="PTHR43157:SF35">
    <property type="entry name" value="DEHYDROGENASE_REDUCTASE FAMILY PROTEIN, PUTATIVE-RELATED"/>
    <property type="match status" value="1"/>
</dbReference>
<dbReference type="PANTHER" id="PTHR43157">
    <property type="entry name" value="PHOSPHATIDYLINOSITOL-GLYCAN BIOSYNTHESIS CLASS F PROTEIN-RELATED"/>
    <property type="match status" value="1"/>
</dbReference>
<dbReference type="Pfam" id="PF00106">
    <property type="entry name" value="adh_short"/>
    <property type="match status" value="1"/>
</dbReference>
<dbReference type="PRINTS" id="PR00081">
    <property type="entry name" value="GDHRDH"/>
</dbReference>
<dbReference type="SUPFAM" id="SSF51735">
    <property type="entry name" value="NAD(P)-binding Rossmann-fold domains"/>
    <property type="match status" value="1"/>
</dbReference>
<gene>
    <name evidence="4" type="primary">virL</name>
    <name type="ORF">TRIVIDRAFT_47190</name>
</gene>
<proteinExistence type="inferred from homology"/>
<comment type="function">
    <text evidence="3">Short chain dehydrogenase; part of the gene cluster that mediates the biosynthesis of virensols and trichoxide, fungal natural products that contain or are derived from a salicylaldehyde core (PubMed:31790246). The pathway begins with the synthesis of the reduced chain in virensol C by the highly reducing polyketide synthase virA via condensation of one acetate and 8 malonate units (PubMed:31790246). VirA has interesting programming rules since the first 2 ketides are fully reduced, the 3 following ketides undergo beta-dehydration, and the last 3 ketides are only reduced to beta-hydroxys to yield the trihydroxy portion (PubMed:31790246). The production of aldehyde virensol C by virA alone is surprising, since virA does not contain a reductase (R) domain that is typically associated with reductive product release in HRPKS (PubMed:31790246). The cupin-domain enzyme virC is involved in enhancing virA product turnover (PubMed:31790246). The short-chain dehydrogenase virB then oxidizes the C-7 alcohol of virensol C to a ketone, yielding virensol D (PubMed:31790246). Virensol D is further transformed to salicylaldehyde 5-deoxyaurocitrin by the short-chain dehydrogenase virD (PubMed:31790246). VirD catalyzes the dehydrogenation of C-3 to form the beta-ketone aldehyde, which is followed by the generation of the nucleophilic C-2 that is required for the intramolecular aldol condensation between C-2 and C-7, itself followed by dehydration and aromatization which leads to salicylaldehyde 5-deoxyaurocitrin (PubMed:31790246). While the dehydrogenation of virensol D is definitely catalyzed by virD, the aldol condensation and dehydration may be uncatalyzed or assisted by virD (PubMed:31790246). The short chain dehydrogenase virG then converts salicylaldehyde 5-deoxyaurocitrin into virensol B which is further hydroxylated by the cytochrome P450 monooxygenase virE to yield the hydroquinone virensol A (PubMed:31790246). VirI then may oxidize virensol A to form the quinone, while virH performs the epoxidation (PubMed:31790246). Finally, the two remaining short-chain dehydrogenases, virK and virL, are probably responsible for reducing the ketones to the corresponding alcohols to furnish the epoxycyclohexanol structure in trichoxide (PubMed:31790246).</text>
</comment>
<comment type="pathway">
    <text evidence="3">Secondary metabolite biosynthesis.</text>
</comment>
<comment type="similarity">
    <text evidence="5">Belongs to the short-chain dehydrogenases/reductases (SDR) family.</text>
</comment>
<accession>G9N4A1</accession>
<reference key="1">
    <citation type="journal article" date="2011" name="Genome Biol.">
        <title>Comparative genome sequence analysis underscores mycoparasitism as the ancestral life style of Trichoderma.</title>
        <authorList>
            <person name="Kubicek C.P."/>
            <person name="Herrera-Estrella A."/>
            <person name="Seidl-Seiboth V."/>
            <person name="Martinez D.A."/>
            <person name="Druzhinina I.S."/>
            <person name="Thon M."/>
            <person name="Zeilinger S."/>
            <person name="Casas-Flores S."/>
            <person name="Horwitz B.A."/>
            <person name="Mukherjee P.K."/>
            <person name="Mukherjee M."/>
            <person name="Kredics L."/>
            <person name="Alcaraz L.D."/>
            <person name="Aerts A."/>
            <person name="Antal Z."/>
            <person name="Atanasova L."/>
            <person name="Cervantes-Badillo M.G."/>
            <person name="Challacombe J."/>
            <person name="Chertkov O."/>
            <person name="McCluskey K."/>
            <person name="Coulpier F."/>
            <person name="Deshpande N."/>
            <person name="von Doehren H."/>
            <person name="Ebbole D.J."/>
            <person name="Esquivel-Naranjo E.U."/>
            <person name="Fekete E."/>
            <person name="Flipphi M."/>
            <person name="Glaser F."/>
            <person name="Gomez-Rodriguez E.Y."/>
            <person name="Gruber S."/>
            <person name="Han C."/>
            <person name="Henrissat B."/>
            <person name="Hermosa R."/>
            <person name="Hernandez-Onate M."/>
            <person name="Karaffa L."/>
            <person name="Kosti I."/>
            <person name="Le Crom S."/>
            <person name="Lindquist E."/>
            <person name="Lucas S."/>
            <person name="Luebeck M."/>
            <person name="Luebeck P.S."/>
            <person name="Margeot A."/>
            <person name="Metz B."/>
            <person name="Misra M."/>
            <person name="Nevalainen H."/>
            <person name="Omann M."/>
            <person name="Packer N."/>
            <person name="Perrone G."/>
            <person name="Uresti-Rivera E.E."/>
            <person name="Salamov A."/>
            <person name="Schmoll M."/>
            <person name="Seiboth B."/>
            <person name="Shapiro H."/>
            <person name="Sukno S."/>
            <person name="Tamayo-Ramos J.A."/>
            <person name="Tisch D."/>
            <person name="Wiest A."/>
            <person name="Wilkinson H.H."/>
            <person name="Zhang M."/>
            <person name="Coutinho P.M."/>
            <person name="Kenerley C.M."/>
            <person name="Monte E."/>
            <person name="Baker S.E."/>
            <person name="Grigoriev I.V."/>
        </authorList>
    </citation>
    <scope>NUCLEOTIDE SEQUENCE [LARGE SCALE GENOMIC DNA]</scope>
    <source>
        <strain>Gv29-8 / FGSC 10586</strain>
    </source>
</reference>
<reference key="2">
    <citation type="journal article" date="2019" name="J. Am. Chem. Soc.">
        <title>Fungal highly reducing polyketide synthases biosynthesize salicylaldehydes that are precursors to epoxycyclohexenol natural products.</title>
        <authorList>
            <person name="Liu L."/>
            <person name="Tang M.C."/>
            <person name="Tang Y."/>
        </authorList>
    </citation>
    <scope>FUNCTION</scope>
    <scope>PATHWAY</scope>
</reference>